<name>VPK18_HUMAN</name>
<proteinExistence type="inferred from homology"/>
<keyword id="KW-0064">Aspartyl protease</keyword>
<keyword id="KW-0895">ERV</keyword>
<keyword id="KW-0378">Hydrolase</keyword>
<keyword id="KW-0645">Protease</keyword>
<keyword id="KW-1185">Reference proteome</keyword>
<keyword id="KW-0688">Ribosomal frameshifting</keyword>
<keyword id="KW-0814">Transposable element</keyword>
<comment type="function">
    <text>Retroviral proteases have roles in the processing of the primary translation products and the maturation of the viral particle. Endogenous Pro proteins may have kept, lost or modified their original function during evolution.</text>
</comment>
<comment type="catalytic activity">
    <reaction>
        <text>Processing at the authentic HIV-1 PR recognition site and release of the mature p17 matrix and the p24 capsid protein, as a result of the cleavage of the -SQNY-|-PIVQ- cleavage site.</text>
        <dbReference type="EC" id="3.4.23.50"/>
    </reaction>
</comment>
<comment type="subunit">
    <text evidence="1">Active as a homodimer.</text>
</comment>
<comment type="alternative products">
    <event type="ribosomal frameshifting"/>
    <isoform>
        <id>P63123-1</id>
        <name>1</name>
        <sequence type="displayed"/>
    </isoform>
    <text>This protein is synthesized as Gag-Pro and Gag-Pro-Pol polyprotein. These polyproteins are thought, by similarity with type-B retroviruses, to be generated by -1 frameshifts occurring at the Gag-Pro and Pro-Pol genes boundaries.</text>
</comment>
<comment type="PTM">
    <text evidence="1">Autoproteolytically processed at the N-terminus. Expected C-terminal autoprocessing not detected. The sequence shown is that of the processed Pro protein (By similarity).</text>
</comment>
<comment type="miscellaneous">
    <text>Intragenic, in the first intron of CD48 gene.</text>
</comment>
<comment type="similarity">
    <text evidence="5">Belongs to the peptidase A2 family. HERV class-II K(HML-2) subfamily.</text>
</comment>
<accession>P63123</accession>
<dbReference type="EC" id="3.4.23.50"/>
<dbReference type="EMBL" id="Y18890">
    <property type="status" value="NOT_ANNOTATED_CDS"/>
    <property type="molecule type" value="Genomic_DNA"/>
</dbReference>
<dbReference type="EMBL" id="AF333072">
    <property type="status" value="NOT_ANNOTATED_CDS"/>
    <property type="molecule type" value="Genomic_DNA"/>
</dbReference>
<dbReference type="EMBL" id="AL121985">
    <property type="status" value="NOT_ANNOTATED_CDS"/>
    <property type="molecule type" value="Genomic_DNA"/>
</dbReference>
<dbReference type="SMR" id="P63123"/>
<dbReference type="BioMuta" id="HGNC:39025"/>
<dbReference type="jPOST" id="P63123"/>
<dbReference type="PeptideAtlas" id="P63123"/>
<dbReference type="GeneCards" id="ERVK-18"/>
<dbReference type="HGNC" id="HGNC:39025">
    <property type="gene designation" value="ERVK-18"/>
</dbReference>
<dbReference type="neXtProt" id="NX_P63123"/>
<dbReference type="PhylomeDB" id="P63123"/>
<dbReference type="Pharos" id="P63123">
    <property type="development level" value="Tdark"/>
</dbReference>
<dbReference type="Proteomes" id="UP000005640">
    <property type="component" value="Unplaced"/>
</dbReference>
<dbReference type="GO" id="GO:0004190">
    <property type="term" value="F:aspartic-type endopeptidase activity"/>
    <property type="evidence" value="ECO:0007669"/>
    <property type="project" value="UniProtKB-KW"/>
</dbReference>
<dbReference type="GO" id="GO:0003676">
    <property type="term" value="F:nucleic acid binding"/>
    <property type="evidence" value="ECO:0007669"/>
    <property type="project" value="InterPro"/>
</dbReference>
<dbReference type="GO" id="GO:0006508">
    <property type="term" value="P:proteolysis"/>
    <property type="evidence" value="ECO:0007669"/>
    <property type="project" value="UniProtKB-KW"/>
</dbReference>
<dbReference type="GO" id="GO:0075523">
    <property type="term" value="P:viral translational frameshifting"/>
    <property type="evidence" value="ECO:0007669"/>
    <property type="project" value="UniProtKB-KW"/>
</dbReference>
<dbReference type="CDD" id="cd05482">
    <property type="entry name" value="HIV_retropepsin_like"/>
    <property type="match status" value="1"/>
</dbReference>
<dbReference type="Gene3D" id="2.40.70.10">
    <property type="entry name" value="Acid Proteases"/>
    <property type="match status" value="1"/>
</dbReference>
<dbReference type="InterPro" id="IPR001969">
    <property type="entry name" value="Aspartic_peptidase_AS"/>
</dbReference>
<dbReference type="InterPro" id="IPR000467">
    <property type="entry name" value="G_patch_dom"/>
</dbReference>
<dbReference type="InterPro" id="IPR051592">
    <property type="entry name" value="HERV-K_Pro_peptidase_A2"/>
</dbReference>
<dbReference type="InterPro" id="IPR001995">
    <property type="entry name" value="Peptidase_A2_cat"/>
</dbReference>
<dbReference type="InterPro" id="IPR021109">
    <property type="entry name" value="Peptidase_aspartic_dom_sf"/>
</dbReference>
<dbReference type="InterPro" id="IPR034170">
    <property type="entry name" value="Retropepsin-like_cat_dom"/>
</dbReference>
<dbReference type="InterPro" id="IPR018061">
    <property type="entry name" value="Retropepsins"/>
</dbReference>
<dbReference type="PANTHER" id="PTHR19422">
    <property type="entry name" value="GAG RETROVIRAL POLYPROTEIN"/>
    <property type="match status" value="1"/>
</dbReference>
<dbReference type="PANTHER" id="PTHR19422:SF123">
    <property type="entry name" value="RT1 CLASS I, LOCUS CE15"/>
    <property type="match status" value="1"/>
</dbReference>
<dbReference type="Pfam" id="PF01585">
    <property type="entry name" value="G-patch"/>
    <property type="match status" value="1"/>
</dbReference>
<dbReference type="Pfam" id="PF00077">
    <property type="entry name" value="RVP"/>
    <property type="match status" value="1"/>
</dbReference>
<dbReference type="SMART" id="SM00443">
    <property type="entry name" value="G_patch"/>
    <property type="match status" value="1"/>
</dbReference>
<dbReference type="SUPFAM" id="SSF50630">
    <property type="entry name" value="Acid proteases"/>
    <property type="match status" value="1"/>
</dbReference>
<dbReference type="PROSITE" id="PS50175">
    <property type="entry name" value="ASP_PROT_RETROV"/>
    <property type="match status" value="1"/>
</dbReference>
<dbReference type="PROSITE" id="PS00141">
    <property type="entry name" value="ASP_PROTEASE"/>
    <property type="match status" value="1"/>
</dbReference>
<dbReference type="PROSITE" id="PS50174">
    <property type="entry name" value="G_PATCH"/>
    <property type="match status" value="1"/>
</dbReference>
<feature type="chain" id="PRO_0000199542" description="Endogenous retrovirus group K member 18 Pro protein">
    <location>
        <begin position="1"/>
        <end position="156"/>
    </location>
</feature>
<feature type="domain" description="Peptidase A2" evidence="3">
    <location>
        <begin position="21"/>
        <end position="96"/>
    </location>
</feature>
<feature type="domain" description="G-patch" evidence="2">
    <location>
        <begin position="111"/>
        <end position="156"/>
    </location>
</feature>
<feature type="active site" evidence="4">
    <location>
        <position position="26"/>
    </location>
</feature>
<feature type="sequence conflict" description="In Ref. 1." evidence="5" ref="1">
    <original>T</original>
    <variation>A</variation>
    <location>
        <position position="48"/>
    </location>
</feature>
<feature type="sequence conflict" description="In Ref. 1." evidence="5" ref="1">
    <original>I</original>
    <variation>V</variation>
    <location>
        <position position="55"/>
    </location>
</feature>
<feature type="sequence conflict" description="In Ref. 1." evidence="5" ref="1">
    <original>V</original>
    <variation>G</variation>
    <location>
        <position position="56"/>
    </location>
</feature>
<organism>
    <name type="scientific">Homo sapiens</name>
    <name type="common">Human</name>
    <dbReference type="NCBI Taxonomy" id="9606"/>
    <lineage>
        <taxon>Eukaryota</taxon>
        <taxon>Metazoa</taxon>
        <taxon>Chordata</taxon>
        <taxon>Craniata</taxon>
        <taxon>Vertebrata</taxon>
        <taxon>Euteleostomi</taxon>
        <taxon>Mammalia</taxon>
        <taxon>Eutheria</taxon>
        <taxon>Euarchontoglires</taxon>
        <taxon>Primates</taxon>
        <taxon>Haplorrhini</taxon>
        <taxon>Catarrhini</taxon>
        <taxon>Hominidae</taxon>
        <taxon>Homo</taxon>
    </lineage>
</organism>
<gene>
    <name type="primary">ERVK-18</name>
</gene>
<sequence length="156" mass="17101">WASQVSENRPVCKAVIQGKQLEGLVDTGADVSIIALNQWPKNWPKQKTVTGLVGIVTASEVYQSTEILHCLGPHNQESTVQPMITSIPLNLWGRDLLQQWGAEITMTATLYSPMSQKIMTKMGYIPGKGLGKNEDGIKVPIEAKINHGREGTGYPF</sequence>
<reference key="1">
    <citation type="journal article" date="1999" name="J. Virol.">
        <title>Genome wide screening, cloning, chromosomal assignment and expression of full-length human endogenous retrovirus type K (HERV-K).</title>
        <authorList>
            <person name="Toenjes R.R."/>
            <person name="Czauderna F."/>
            <person name="Kurth R."/>
        </authorList>
    </citation>
    <scope>NUCLEOTIDE SEQUENCE [GENOMIC DNA]</scope>
</reference>
<reference key="2">
    <citation type="journal article" date="2001" name="Immunity">
        <title>Interferon-alpha induced endogenous superantigen: a model linking environment and autoimmunity.</title>
        <authorList>
            <person name="Stauffer Y."/>
            <person name="Marguerat S."/>
            <person name="Meylan F."/>
            <person name="Ucla C."/>
            <person name="Sutkowski N."/>
            <person name="Huber B.T."/>
            <person name="Pelet T."/>
            <person name="Conrad B."/>
        </authorList>
    </citation>
    <scope>NUCLEOTIDE SEQUENCE [GENOMIC DNA]</scope>
</reference>
<reference key="3">
    <citation type="journal article" date="2006" name="Nature">
        <title>The DNA sequence and biological annotation of human chromosome 1.</title>
        <authorList>
            <person name="Gregory S.G."/>
            <person name="Barlow K.F."/>
            <person name="McLay K.E."/>
            <person name="Kaul R."/>
            <person name="Swarbreck D."/>
            <person name="Dunham A."/>
            <person name="Scott C.E."/>
            <person name="Howe K.L."/>
            <person name="Woodfine K."/>
            <person name="Spencer C.C.A."/>
            <person name="Jones M.C."/>
            <person name="Gillson C."/>
            <person name="Searle S."/>
            <person name="Zhou Y."/>
            <person name="Kokocinski F."/>
            <person name="McDonald L."/>
            <person name="Evans R."/>
            <person name="Phillips K."/>
            <person name="Atkinson A."/>
            <person name="Cooper R."/>
            <person name="Jones C."/>
            <person name="Hall R.E."/>
            <person name="Andrews T.D."/>
            <person name="Lloyd C."/>
            <person name="Ainscough R."/>
            <person name="Almeida J.P."/>
            <person name="Ambrose K.D."/>
            <person name="Anderson F."/>
            <person name="Andrew R.W."/>
            <person name="Ashwell R.I.S."/>
            <person name="Aubin K."/>
            <person name="Babbage A.K."/>
            <person name="Bagguley C.L."/>
            <person name="Bailey J."/>
            <person name="Beasley H."/>
            <person name="Bethel G."/>
            <person name="Bird C.P."/>
            <person name="Bray-Allen S."/>
            <person name="Brown J.Y."/>
            <person name="Brown A.J."/>
            <person name="Buckley D."/>
            <person name="Burton J."/>
            <person name="Bye J."/>
            <person name="Carder C."/>
            <person name="Chapman J.C."/>
            <person name="Clark S.Y."/>
            <person name="Clarke G."/>
            <person name="Clee C."/>
            <person name="Cobley V."/>
            <person name="Collier R.E."/>
            <person name="Corby N."/>
            <person name="Coville G.J."/>
            <person name="Davies J."/>
            <person name="Deadman R."/>
            <person name="Dunn M."/>
            <person name="Earthrowl M."/>
            <person name="Ellington A.G."/>
            <person name="Errington H."/>
            <person name="Frankish A."/>
            <person name="Frankland J."/>
            <person name="French L."/>
            <person name="Garner P."/>
            <person name="Garnett J."/>
            <person name="Gay L."/>
            <person name="Ghori M.R.J."/>
            <person name="Gibson R."/>
            <person name="Gilby L.M."/>
            <person name="Gillett W."/>
            <person name="Glithero R.J."/>
            <person name="Grafham D.V."/>
            <person name="Griffiths C."/>
            <person name="Griffiths-Jones S."/>
            <person name="Grocock R."/>
            <person name="Hammond S."/>
            <person name="Harrison E.S.I."/>
            <person name="Hart E."/>
            <person name="Haugen E."/>
            <person name="Heath P.D."/>
            <person name="Holmes S."/>
            <person name="Holt K."/>
            <person name="Howden P.J."/>
            <person name="Hunt A.R."/>
            <person name="Hunt S.E."/>
            <person name="Hunter G."/>
            <person name="Isherwood J."/>
            <person name="James R."/>
            <person name="Johnson C."/>
            <person name="Johnson D."/>
            <person name="Joy A."/>
            <person name="Kay M."/>
            <person name="Kershaw J.K."/>
            <person name="Kibukawa M."/>
            <person name="Kimberley A.M."/>
            <person name="King A."/>
            <person name="Knights A.J."/>
            <person name="Lad H."/>
            <person name="Laird G."/>
            <person name="Lawlor S."/>
            <person name="Leongamornlert D.A."/>
            <person name="Lloyd D.M."/>
            <person name="Loveland J."/>
            <person name="Lovell J."/>
            <person name="Lush M.J."/>
            <person name="Lyne R."/>
            <person name="Martin S."/>
            <person name="Mashreghi-Mohammadi M."/>
            <person name="Matthews L."/>
            <person name="Matthews N.S.W."/>
            <person name="McLaren S."/>
            <person name="Milne S."/>
            <person name="Mistry S."/>
            <person name="Moore M.J.F."/>
            <person name="Nickerson T."/>
            <person name="O'Dell C.N."/>
            <person name="Oliver K."/>
            <person name="Palmeiri A."/>
            <person name="Palmer S.A."/>
            <person name="Parker A."/>
            <person name="Patel D."/>
            <person name="Pearce A.V."/>
            <person name="Peck A.I."/>
            <person name="Pelan S."/>
            <person name="Phelps K."/>
            <person name="Phillimore B.J."/>
            <person name="Plumb R."/>
            <person name="Rajan J."/>
            <person name="Raymond C."/>
            <person name="Rouse G."/>
            <person name="Saenphimmachak C."/>
            <person name="Sehra H.K."/>
            <person name="Sheridan E."/>
            <person name="Shownkeen R."/>
            <person name="Sims S."/>
            <person name="Skuce C.D."/>
            <person name="Smith M."/>
            <person name="Steward C."/>
            <person name="Subramanian S."/>
            <person name="Sycamore N."/>
            <person name="Tracey A."/>
            <person name="Tromans A."/>
            <person name="Van Helmond Z."/>
            <person name="Wall M."/>
            <person name="Wallis J.M."/>
            <person name="White S."/>
            <person name="Whitehead S.L."/>
            <person name="Wilkinson J.E."/>
            <person name="Willey D.L."/>
            <person name="Williams H."/>
            <person name="Wilming L."/>
            <person name="Wray P.W."/>
            <person name="Wu Z."/>
            <person name="Coulson A."/>
            <person name="Vaudin M."/>
            <person name="Sulston J.E."/>
            <person name="Durbin R.M."/>
            <person name="Hubbard T."/>
            <person name="Wooster R."/>
            <person name="Dunham I."/>
            <person name="Carter N.P."/>
            <person name="McVean G."/>
            <person name="Ross M.T."/>
            <person name="Harrow J."/>
            <person name="Olson M.V."/>
            <person name="Beck S."/>
            <person name="Rogers J."/>
            <person name="Bentley D.R."/>
        </authorList>
    </citation>
    <scope>NUCLEOTIDE SEQUENCE [LARGE SCALE GENOMIC DNA]</scope>
</reference>
<evidence type="ECO:0000250" key="1"/>
<evidence type="ECO:0000255" key="2">
    <source>
        <dbReference type="PROSITE-ProRule" id="PRU00092"/>
    </source>
</evidence>
<evidence type="ECO:0000255" key="3">
    <source>
        <dbReference type="PROSITE-ProRule" id="PRU00275"/>
    </source>
</evidence>
<evidence type="ECO:0000255" key="4">
    <source>
        <dbReference type="PROSITE-ProRule" id="PRU10094"/>
    </source>
</evidence>
<evidence type="ECO:0000305" key="5"/>
<protein>
    <recommendedName>
        <fullName>Endogenous retrovirus group K member 18 Pro protein</fullName>
    </recommendedName>
    <alternativeName>
        <fullName>HERV-K(C1a) Pro protein</fullName>
    </alternativeName>
    <alternativeName>
        <fullName>HERV-K110 Pro protein</fullName>
    </alternativeName>
    <alternativeName>
        <fullName>HERV-K18 Pro protein</fullName>
    </alternativeName>
    <alternativeName>
        <fullName>HERV-K_1q23.3 provirus ancestral Pro protein</fullName>
        <ecNumber>3.4.23.50</ecNumber>
    </alternativeName>
    <alternativeName>
        <fullName>Protease</fullName>
    </alternativeName>
    <alternativeName>
        <fullName>Proteinase</fullName>
        <shortName>PR</shortName>
    </alternativeName>
</protein>